<proteinExistence type="inferred from homology"/>
<organism>
    <name type="scientific">Desulfosudis oleivorans (strain DSM 6200 / JCM 39069 / Hxd3)</name>
    <name type="common">Desulfococcus oleovorans</name>
    <dbReference type="NCBI Taxonomy" id="96561"/>
    <lineage>
        <taxon>Bacteria</taxon>
        <taxon>Pseudomonadati</taxon>
        <taxon>Thermodesulfobacteriota</taxon>
        <taxon>Desulfobacteria</taxon>
        <taxon>Desulfobacterales</taxon>
        <taxon>Desulfosudaceae</taxon>
        <taxon>Desulfosudis</taxon>
    </lineage>
</organism>
<feature type="chain" id="PRO_1000142808" description="Large ribosomal subunit protein uL15">
    <location>
        <begin position="1"/>
        <end position="147"/>
    </location>
</feature>
<feature type="region of interest" description="Disordered" evidence="2">
    <location>
        <begin position="1"/>
        <end position="57"/>
    </location>
</feature>
<feature type="compositionally biased region" description="Gly residues" evidence="2">
    <location>
        <begin position="21"/>
        <end position="31"/>
    </location>
</feature>
<feature type="compositionally biased region" description="Gly residues" evidence="2">
    <location>
        <begin position="42"/>
        <end position="52"/>
    </location>
</feature>
<protein>
    <recommendedName>
        <fullName evidence="1">Large ribosomal subunit protein uL15</fullName>
    </recommendedName>
    <alternativeName>
        <fullName evidence="3">50S ribosomal protein L15</fullName>
    </alternativeName>
</protein>
<sequence length="147" mass="15266">MDLSNLSPAPGSTKARKRLGRGPGSGNGTTAGRGNKGHNSRSGGGVRPGFEGGQMPLHRRLPKRGFVNIFAKDIAVVNIRDLARFESGSVVDGEALKAKGLVKGRVDGIKLLGKGDIAYPLTVKVSHVSRSAREKIEAAGGAIEVIS</sequence>
<reference key="1">
    <citation type="submission" date="2007-10" db="EMBL/GenBank/DDBJ databases">
        <title>Complete sequence of Desulfococcus oleovorans Hxd3.</title>
        <authorList>
            <consortium name="US DOE Joint Genome Institute"/>
            <person name="Copeland A."/>
            <person name="Lucas S."/>
            <person name="Lapidus A."/>
            <person name="Barry K."/>
            <person name="Glavina del Rio T."/>
            <person name="Dalin E."/>
            <person name="Tice H."/>
            <person name="Pitluck S."/>
            <person name="Kiss H."/>
            <person name="Brettin T."/>
            <person name="Bruce D."/>
            <person name="Detter J.C."/>
            <person name="Han C."/>
            <person name="Schmutz J."/>
            <person name="Larimer F."/>
            <person name="Land M."/>
            <person name="Hauser L."/>
            <person name="Kyrpides N."/>
            <person name="Kim E."/>
            <person name="Wawrik B."/>
            <person name="Richardson P."/>
        </authorList>
    </citation>
    <scope>NUCLEOTIDE SEQUENCE [LARGE SCALE GENOMIC DNA]</scope>
    <source>
        <strain>DSM 6200 / JCM 39069 / Hxd3</strain>
    </source>
</reference>
<accession>A8ZV76</accession>
<comment type="function">
    <text evidence="1">Binds to the 23S rRNA.</text>
</comment>
<comment type="subunit">
    <text evidence="1">Part of the 50S ribosomal subunit.</text>
</comment>
<comment type="similarity">
    <text evidence="1">Belongs to the universal ribosomal protein uL15 family.</text>
</comment>
<evidence type="ECO:0000255" key="1">
    <source>
        <dbReference type="HAMAP-Rule" id="MF_01341"/>
    </source>
</evidence>
<evidence type="ECO:0000256" key="2">
    <source>
        <dbReference type="SAM" id="MobiDB-lite"/>
    </source>
</evidence>
<evidence type="ECO:0000305" key="3"/>
<keyword id="KW-1185">Reference proteome</keyword>
<keyword id="KW-0687">Ribonucleoprotein</keyword>
<keyword id="KW-0689">Ribosomal protein</keyword>
<keyword id="KW-0694">RNA-binding</keyword>
<keyword id="KW-0699">rRNA-binding</keyword>
<gene>
    <name evidence="1" type="primary">rplO</name>
    <name type="ordered locus">Dole_0727</name>
</gene>
<name>RL15_DESOH</name>
<dbReference type="EMBL" id="CP000859">
    <property type="protein sequence ID" value="ABW66537.1"/>
    <property type="molecule type" value="Genomic_DNA"/>
</dbReference>
<dbReference type="RefSeq" id="WP_012174155.1">
    <property type="nucleotide sequence ID" value="NC_009943.1"/>
</dbReference>
<dbReference type="SMR" id="A8ZV76"/>
<dbReference type="STRING" id="96561.Dole_0727"/>
<dbReference type="KEGG" id="dol:Dole_0727"/>
<dbReference type="eggNOG" id="COG0200">
    <property type="taxonomic scope" value="Bacteria"/>
</dbReference>
<dbReference type="HOGENOM" id="CLU_055188_4_2_7"/>
<dbReference type="OrthoDB" id="9810293at2"/>
<dbReference type="Proteomes" id="UP000008561">
    <property type="component" value="Chromosome"/>
</dbReference>
<dbReference type="GO" id="GO:0022625">
    <property type="term" value="C:cytosolic large ribosomal subunit"/>
    <property type="evidence" value="ECO:0007669"/>
    <property type="project" value="TreeGrafter"/>
</dbReference>
<dbReference type="GO" id="GO:0019843">
    <property type="term" value="F:rRNA binding"/>
    <property type="evidence" value="ECO:0007669"/>
    <property type="project" value="UniProtKB-UniRule"/>
</dbReference>
<dbReference type="GO" id="GO:0003735">
    <property type="term" value="F:structural constituent of ribosome"/>
    <property type="evidence" value="ECO:0007669"/>
    <property type="project" value="InterPro"/>
</dbReference>
<dbReference type="GO" id="GO:0006412">
    <property type="term" value="P:translation"/>
    <property type="evidence" value="ECO:0007669"/>
    <property type="project" value="UniProtKB-UniRule"/>
</dbReference>
<dbReference type="Gene3D" id="3.100.10.10">
    <property type="match status" value="1"/>
</dbReference>
<dbReference type="HAMAP" id="MF_01341">
    <property type="entry name" value="Ribosomal_uL15"/>
    <property type="match status" value="1"/>
</dbReference>
<dbReference type="InterPro" id="IPR030878">
    <property type="entry name" value="Ribosomal_uL15"/>
</dbReference>
<dbReference type="InterPro" id="IPR021131">
    <property type="entry name" value="Ribosomal_uL15/eL18"/>
</dbReference>
<dbReference type="InterPro" id="IPR036227">
    <property type="entry name" value="Ribosomal_uL15/eL18_sf"/>
</dbReference>
<dbReference type="InterPro" id="IPR005749">
    <property type="entry name" value="Ribosomal_uL15_bac-type"/>
</dbReference>
<dbReference type="InterPro" id="IPR001196">
    <property type="entry name" value="Ribosomal_uL15_CS"/>
</dbReference>
<dbReference type="NCBIfam" id="TIGR01071">
    <property type="entry name" value="rplO_bact"/>
    <property type="match status" value="1"/>
</dbReference>
<dbReference type="PANTHER" id="PTHR12934">
    <property type="entry name" value="50S RIBOSOMAL PROTEIN L15"/>
    <property type="match status" value="1"/>
</dbReference>
<dbReference type="PANTHER" id="PTHR12934:SF11">
    <property type="entry name" value="LARGE RIBOSOMAL SUBUNIT PROTEIN UL15M"/>
    <property type="match status" value="1"/>
</dbReference>
<dbReference type="Pfam" id="PF00828">
    <property type="entry name" value="Ribosomal_L27A"/>
    <property type="match status" value="1"/>
</dbReference>
<dbReference type="SUPFAM" id="SSF52080">
    <property type="entry name" value="Ribosomal proteins L15p and L18e"/>
    <property type="match status" value="1"/>
</dbReference>
<dbReference type="PROSITE" id="PS00475">
    <property type="entry name" value="RIBOSOMAL_L15"/>
    <property type="match status" value="1"/>
</dbReference>